<sequence length="144" mass="16066">MAYKHILIAVDLSPESKVLVEKAVSMARPYNAKVSLIHVDVNYSDLYTGLIDVNLGDMQKRISEETHHALTELSTNAGYPITETLSGSGDLGQVLVDAIKKYDMDLVVCGHHQDFWSKLMSSARQLINTVHVDMLIVPLRDEEE</sequence>
<feature type="initiator methionine" description="Removed" evidence="1">
    <location>
        <position position="1"/>
    </location>
</feature>
<feature type="chain" id="PRO_0000147398" description="Universal stress protein A">
    <location>
        <begin position="2"/>
        <end position="144"/>
    </location>
</feature>
<dbReference type="EMBL" id="AE014075">
    <property type="protein sequence ID" value="AAN82729.1"/>
    <property type="molecule type" value="Genomic_DNA"/>
</dbReference>
<dbReference type="RefSeq" id="WP_000323571.1">
    <property type="nucleotide sequence ID" value="NZ_CP051263.1"/>
</dbReference>
<dbReference type="SMR" id="P0AED1"/>
<dbReference type="STRING" id="199310.c4293"/>
<dbReference type="GeneID" id="93778498"/>
<dbReference type="KEGG" id="ecc:c4293"/>
<dbReference type="eggNOG" id="COG0589">
    <property type="taxonomic scope" value="Bacteria"/>
</dbReference>
<dbReference type="HOGENOM" id="CLU_049301_18_0_6"/>
<dbReference type="BioCyc" id="ECOL199310:C4293-MONOMER"/>
<dbReference type="Proteomes" id="UP000001410">
    <property type="component" value="Chromosome"/>
</dbReference>
<dbReference type="GO" id="GO:0005737">
    <property type="term" value="C:cytoplasm"/>
    <property type="evidence" value="ECO:0007669"/>
    <property type="project" value="UniProtKB-SubCell"/>
</dbReference>
<dbReference type="CDD" id="cd23657">
    <property type="entry name" value="USP-A-like"/>
    <property type="match status" value="1"/>
</dbReference>
<dbReference type="FunFam" id="3.40.50.620:FF:000014">
    <property type="entry name" value="Universal stress protein"/>
    <property type="match status" value="1"/>
</dbReference>
<dbReference type="Gene3D" id="3.40.50.620">
    <property type="entry name" value="HUPs"/>
    <property type="match status" value="1"/>
</dbReference>
<dbReference type="InterPro" id="IPR014729">
    <property type="entry name" value="Rossmann-like_a/b/a_fold"/>
</dbReference>
<dbReference type="InterPro" id="IPR006015">
    <property type="entry name" value="Universal_stress_UspA"/>
</dbReference>
<dbReference type="InterPro" id="IPR006016">
    <property type="entry name" value="UspA"/>
</dbReference>
<dbReference type="NCBIfam" id="NF011698">
    <property type="entry name" value="PRK15118.1"/>
    <property type="match status" value="1"/>
</dbReference>
<dbReference type="PANTHER" id="PTHR46268">
    <property type="entry name" value="STRESS RESPONSE PROTEIN NHAX"/>
    <property type="match status" value="1"/>
</dbReference>
<dbReference type="PANTHER" id="PTHR46268:SF23">
    <property type="entry name" value="UNIVERSAL STRESS PROTEIN A-RELATED"/>
    <property type="match status" value="1"/>
</dbReference>
<dbReference type="Pfam" id="PF00582">
    <property type="entry name" value="Usp"/>
    <property type="match status" value="1"/>
</dbReference>
<dbReference type="PIRSF" id="PIRSF006276">
    <property type="entry name" value="UspA"/>
    <property type="match status" value="1"/>
</dbReference>
<dbReference type="SUPFAM" id="SSF52402">
    <property type="entry name" value="Adenine nucleotide alpha hydrolases-like"/>
    <property type="match status" value="1"/>
</dbReference>
<organism>
    <name type="scientific">Escherichia coli O6:H1 (strain CFT073 / ATCC 700928 / UPEC)</name>
    <dbReference type="NCBI Taxonomy" id="199310"/>
    <lineage>
        <taxon>Bacteria</taxon>
        <taxon>Pseudomonadati</taxon>
        <taxon>Pseudomonadota</taxon>
        <taxon>Gammaproteobacteria</taxon>
        <taxon>Enterobacterales</taxon>
        <taxon>Enterobacteriaceae</taxon>
        <taxon>Escherichia</taxon>
    </lineage>
</organism>
<name>USPA_ECOL6</name>
<proteinExistence type="inferred from homology"/>
<comment type="function">
    <text evidence="1">Required for resistance to DNA-damaging agents.</text>
</comment>
<comment type="subunit">
    <text evidence="1">Homodimer.</text>
</comment>
<comment type="subcellular location">
    <subcellularLocation>
        <location evidence="1">Cytoplasm</location>
    </subcellularLocation>
</comment>
<comment type="similarity">
    <text evidence="2">Belongs to the universal stress protein A family.</text>
</comment>
<accession>P0AED1</accession>
<accession>P28242</accession>
<gene>
    <name type="primary">uspA</name>
    <name type="ordered locus">c4293</name>
</gene>
<keyword id="KW-0963">Cytoplasm</keyword>
<keyword id="KW-0597">Phosphoprotein</keyword>
<keyword id="KW-1185">Reference proteome</keyword>
<protein>
    <recommendedName>
        <fullName>Universal stress protein A</fullName>
    </recommendedName>
</protein>
<reference key="1">
    <citation type="journal article" date="2002" name="Proc. Natl. Acad. Sci. U.S.A.">
        <title>Extensive mosaic structure revealed by the complete genome sequence of uropathogenic Escherichia coli.</title>
        <authorList>
            <person name="Welch R.A."/>
            <person name="Burland V."/>
            <person name="Plunkett G. III"/>
            <person name="Redford P."/>
            <person name="Roesch P."/>
            <person name="Rasko D."/>
            <person name="Buckles E.L."/>
            <person name="Liou S.-R."/>
            <person name="Boutin A."/>
            <person name="Hackett J."/>
            <person name="Stroud D."/>
            <person name="Mayhew G.F."/>
            <person name="Rose D.J."/>
            <person name="Zhou S."/>
            <person name="Schwartz D.C."/>
            <person name="Perna N.T."/>
            <person name="Mobley H.L.T."/>
            <person name="Donnenberg M.S."/>
            <person name="Blattner F.R."/>
        </authorList>
    </citation>
    <scope>NUCLEOTIDE SEQUENCE [LARGE SCALE GENOMIC DNA]</scope>
    <source>
        <strain>CFT073 / ATCC 700928 / UPEC</strain>
    </source>
</reference>
<evidence type="ECO:0000250" key="1"/>
<evidence type="ECO:0000305" key="2"/>